<evidence type="ECO:0000255" key="1">
    <source>
        <dbReference type="HAMAP-Rule" id="MF_01318"/>
    </source>
</evidence>
<evidence type="ECO:0000305" key="2"/>
<feature type="chain" id="PRO_1000165669" description="Large ribosomal subunit protein uL1">
    <location>
        <begin position="1"/>
        <end position="237"/>
    </location>
</feature>
<accession>B8G990</accession>
<dbReference type="EMBL" id="CP001337">
    <property type="protein sequence ID" value="ACL24380.1"/>
    <property type="molecule type" value="Genomic_DNA"/>
</dbReference>
<dbReference type="RefSeq" id="WP_015940239.1">
    <property type="nucleotide sequence ID" value="NC_011831.1"/>
</dbReference>
<dbReference type="SMR" id="B8G990"/>
<dbReference type="STRING" id="326427.Cagg_1475"/>
<dbReference type="KEGG" id="cag:Cagg_1475"/>
<dbReference type="eggNOG" id="COG0081">
    <property type="taxonomic scope" value="Bacteria"/>
</dbReference>
<dbReference type="HOGENOM" id="CLU_062853_0_0_0"/>
<dbReference type="OrthoDB" id="9803740at2"/>
<dbReference type="Proteomes" id="UP000002508">
    <property type="component" value="Chromosome"/>
</dbReference>
<dbReference type="GO" id="GO:0015934">
    <property type="term" value="C:large ribosomal subunit"/>
    <property type="evidence" value="ECO:0007669"/>
    <property type="project" value="InterPro"/>
</dbReference>
<dbReference type="GO" id="GO:0019843">
    <property type="term" value="F:rRNA binding"/>
    <property type="evidence" value="ECO:0007669"/>
    <property type="project" value="UniProtKB-UniRule"/>
</dbReference>
<dbReference type="GO" id="GO:0003735">
    <property type="term" value="F:structural constituent of ribosome"/>
    <property type="evidence" value="ECO:0007669"/>
    <property type="project" value="InterPro"/>
</dbReference>
<dbReference type="GO" id="GO:0000049">
    <property type="term" value="F:tRNA binding"/>
    <property type="evidence" value="ECO:0007669"/>
    <property type="project" value="UniProtKB-KW"/>
</dbReference>
<dbReference type="GO" id="GO:0006417">
    <property type="term" value="P:regulation of translation"/>
    <property type="evidence" value="ECO:0007669"/>
    <property type="project" value="UniProtKB-KW"/>
</dbReference>
<dbReference type="GO" id="GO:0006412">
    <property type="term" value="P:translation"/>
    <property type="evidence" value="ECO:0007669"/>
    <property type="project" value="UniProtKB-UniRule"/>
</dbReference>
<dbReference type="CDD" id="cd00403">
    <property type="entry name" value="Ribosomal_L1"/>
    <property type="match status" value="1"/>
</dbReference>
<dbReference type="FunFam" id="3.40.50.790:FF:000001">
    <property type="entry name" value="50S ribosomal protein L1"/>
    <property type="match status" value="1"/>
</dbReference>
<dbReference type="Gene3D" id="3.30.190.20">
    <property type="match status" value="1"/>
</dbReference>
<dbReference type="Gene3D" id="3.40.50.790">
    <property type="match status" value="1"/>
</dbReference>
<dbReference type="HAMAP" id="MF_01318_B">
    <property type="entry name" value="Ribosomal_uL1_B"/>
    <property type="match status" value="1"/>
</dbReference>
<dbReference type="InterPro" id="IPR005878">
    <property type="entry name" value="Ribosom_uL1_bac-type"/>
</dbReference>
<dbReference type="InterPro" id="IPR002143">
    <property type="entry name" value="Ribosomal_uL1"/>
</dbReference>
<dbReference type="InterPro" id="IPR023674">
    <property type="entry name" value="Ribosomal_uL1-like"/>
</dbReference>
<dbReference type="InterPro" id="IPR028364">
    <property type="entry name" value="Ribosomal_uL1/biogenesis"/>
</dbReference>
<dbReference type="InterPro" id="IPR016095">
    <property type="entry name" value="Ribosomal_uL1_3-a/b-sand"/>
</dbReference>
<dbReference type="InterPro" id="IPR023673">
    <property type="entry name" value="Ribosomal_uL1_CS"/>
</dbReference>
<dbReference type="NCBIfam" id="TIGR01169">
    <property type="entry name" value="rplA_bact"/>
    <property type="match status" value="1"/>
</dbReference>
<dbReference type="PANTHER" id="PTHR36427">
    <property type="entry name" value="54S RIBOSOMAL PROTEIN L1, MITOCHONDRIAL"/>
    <property type="match status" value="1"/>
</dbReference>
<dbReference type="PANTHER" id="PTHR36427:SF3">
    <property type="entry name" value="LARGE RIBOSOMAL SUBUNIT PROTEIN UL1M"/>
    <property type="match status" value="1"/>
</dbReference>
<dbReference type="Pfam" id="PF00687">
    <property type="entry name" value="Ribosomal_L1"/>
    <property type="match status" value="1"/>
</dbReference>
<dbReference type="PIRSF" id="PIRSF002155">
    <property type="entry name" value="Ribosomal_L1"/>
    <property type="match status" value="1"/>
</dbReference>
<dbReference type="SUPFAM" id="SSF56808">
    <property type="entry name" value="Ribosomal protein L1"/>
    <property type="match status" value="1"/>
</dbReference>
<dbReference type="PROSITE" id="PS01199">
    <property type="entry name" value="RIBOSOMAL_L1"/>
    <property type="match status" value="1"/>
</dbReference>
<keyword id="KW-0678">Repressor</keyword>
<keyword id="KW-0687">Ribonucleoprotein</keyword>
<keyword id="KW-0689">Ribosomal protein</keyword>
<keyword id="KW-0694">RNA-binding</keyword>
<keyword id="KW-0699">rRNA-binding</keyword>
<keyword id="KW-0810">Translation regulation</keyword>
<keyword id="KW-0820">tRNA-binding</keyword>
<comment type="function">
    <text evidence="1">Binds directly to 23S rRNA. The L1 stalk is quite mobile in the ribosome, and is involved in E site tRNA release.</text>
</comment>
<comment type="function">
    <text evidence="1">Protein L1 is also a translational repressor protein, it controls the translation of the L11 operon by binding to its mRNA.</text>
</comment>
<comment type="subunit">
    <text evidence="1">Part of the 50S ribosomal subunit.</text>
</comment>
<comment type="similarity">
    <text evidence="1">Belongs to the universal ribosomal protein uL1 family.</text>
</comment>
<gene>
    <name evidence="1" type="primary">rplA</name>
    <name type="ordered locus">Cagg_1475</name>
</gene>
<sequence>MPKHGKKYLAALAKVDRSRFYTPAEAIALVKETSYTKFDATVEAHLRLGIDPRHADQNIRTTVALPHGTGKTVRVLVFAQGEALQTALDAGADYAGSDDLIARIDRENFFDFDVAIATPDMMGKVGRIGRKLGPRGLMPNPKSGTVVQPADLARTIREVKGGRVEIRNDKTGILHVAIGKVSFTSQQLSENLAALMEAVKAAKPSGAKGTYIRSVTLTSTMGPGVPVDLVAVQNLKL</sequence>
<name>RL1_CHLAD</name>
<organism>
    <name type="scientific">Chloroflexus aggregans (strain MD-66 / DSM 9485)</name>
    <dbReference type="NCBI Taxonomy" id="326427"/>
    <lineage>
        <taxon>Bacteria</taxon>
        <taxon>Bacillati</taxon>
        <taxon>Chloroflexota</taxon>
        <taxon>Chloroflexia</taxon>
        <taxon>Chloroflexales</taxon>
        <taxon>Chloroflexineae</taxon>
        <taxon>Chloroflexaceae</taxon>
        <taxon>Chloroflexus</taxon>
    </lineage>
</organism>
<reference key="1">
    <citation type="submission" date="2008-12" db="EMBL/GenBank/DDBJ databases">
        <title>Complete sequence of Chloroflexus aggregans DSM 9485.</title>
        <authorList>
            <consortium name="US DOE Joint Genome Institute"/>
            <person name="Lucas S."/>
            <person name="Copeland A."/>
            <person name="Lapidus A."/>
            <person name="Glavina del Rio T."/>
            <person name="Dalin E."/>
            <person name="Tice H."/>
            <person name="Pitluck S."/>
            <person name="Foster B."/>
            <person name="Larimer F."/>
            <person name="Land M."/>
            <person name="Hauser L."/>
            <person name="Kyrpides N."/>
            <person name="Mikhailova N."/>
            <person name="Bryant D.A."/>
            <person name="Richardson P."/>
        </authorList>
    </citation>
    <scope>NUCLEOTIDE SEQUENCE [LARGE SCALE GENOMIC DNA]</scope>
    <source>
        <strain>MD-66 / DSM 9485</strain>
    </source>
</reference>
<proteinExistence type="inferred from homology"/>
<protein>
    <recommendedName>
        <fullName evidence="1">Large ribosomal subunit protein uL1</fullName>
    </recommendedName>
    <alternativeName>
        <fullName evidence="2">50S ribosomal protein L1</fullName>
    </alternativeName>
</protein>